<comment type="function">
    <text evidence="1">Plays a role in pre-mRNA splicing. Binds to the polypyrimidine tract of introns. May promote the binding of U2 snRNP to pre-mRNA (By similarity).</text>
</comment>
<comment type="subcellular location">
    <subcellularLocation>
        <location evidence="3">Nucleus</location>
    </subcellularLocation>
</comment>
<comment type="alternative products">
    <event type="alternative splicing"/>
    <isoform>
        <id>Q6ICX4-1</id>
        <name>1</name>
        <sequence type="displayed"/>
    </isoform>
    <text>A number of isoforms are produced. According to EST sequences.</text>
</comment>
<keyword id="KW-0025">Alternative splicing</keyword>
<keyword id="KW-0507">mRNA processing</keyword>
<keyword id="KW-0508">mRNA splicing</keyword>
<keyword id="KW-0539">Nucleus</keyword>
<keyword id="KW-1185">Reference proteome</keyword>
<keyword id="KW-0677">Repeat</keyword>
<keyword id="KW-0694">RNA-binding</keyword>
<name>PTBP3_ARATH</name>
<dbReference type="EMBL" id="AC005687">
    <property type="status" value="NOT_ANNOTATED_CDS"/>
    <property type="molecule type" value="Genomic_DNA"/>
</dbReference>
<dbReference type="EMBL" id="CP002684">
    <property type="protein sequence ID" value="AEE31961.1"/>
    <property type="molecule type" value="Genomic_DNA"/>
</dbReference>
<dbReference type="EMBL" id="CP002684">
    <property type="protein sequence ID" value="AEE31962.1"/>
    <property type="molecule type" value="Genomic_DNA"/>
</dbReference>
<dbReference type="EMBL" id="BT014899">
    <property type="protein sequence ID" value="AAT44975.1"/>
    <property type="molecule type" value="mRNA"/>
</dbReference>
<dbReference type="EMBL" id="BT015028">
    <property type="protein sequence ID" value="AAT70479.1"/>
    <property type="molecule type" value="mRNA"/>
</dbReference>
<dbReference type="RefSeq" id="NP_001077672.1">
    <molecule id="Q6ICX4-1"/>
    <property type="nucleotide sequence ID" value="NM_001084203.1"/>
</dbReference>
<dbReference type="RefSeq" id="NP_175010.2">
    <molecule id="Q6ICX4-1"/>
    <property type="nucleotide sequence ID" value="NM_103470.5"/>
</dbReference>
<dbReference type="SMR" id="Q6ICX4"/>
<dbReference type="BioGRID" id="26143">
    <property type="interactions" value="1"/>
</dbReference>
<dbReference type="FunCoup" id="Q6ICX4">
    <property type="interactions" value="3183"/>
</dbReference>
<dbReference type="STRING" id="3702.Q6ICX4"/>
<dbReference type="GlyGen" id="Q6ICX4">
    <property type="glycosylation" value="1 site"/>
</dbReference>
<dbReference type="PaxDb" id="3702-AT1G43190.1"/>
<dbReference type="ProteomicsDB" id="226042">
    <molecule id="Q6ICX4-1"/>
</dbReference>
<dbReference type="EnsemblPlants" id="AT1G43190.1">
    <molecule id="Q6ICX4-1"/>
    <property type="protein sequence ID" value="AT1G43190.1"/>
    <property type="gene ID" value="AT1G43190"/>
</dbReference>
<dbReference type="EnsemblPlants" id="AT1G43190.2">
    <molecule id="Q6ICX4-1"/>
    <property type="protein sequence ID" value="AT1G43190.2"/>
    <property type="gene ID" value="AT1G43190"/>
</dbReference>
<dbReference type="GeneID" id="840918"/>
<dbReference type="Gramene" id="AT1G43190.1">
    <molecule id="Q6ICX4-1"/>
    <property type="protein sequence ID" value="AT1G43190.1"/>
    <property type="gene ID" value="AT1G43190"/>
</dbReference>
<dbReference type="Gramene" id="AT1G43190.2">
    <molecule id="Q6ICX4-1"/>
    <property type="protein sequence ID" value="AT1G43190.2"/>
    <property type="gene ID" value="AT1G43190"/>
</dbReference>
<dbReference type="KEGG" id="ath:AT1G43190"/>
<dbReference type="Araport" id="AT1G43190"/>
<dbReference type="TAIR" id="AT1G43190">
    <property type="gene designation" value="PTB3"/>
</dbReference>
<dbReference type="eggNOG" id="KOG1190">
    <property type="taxonomic scope" value="Eukaryota"/>
</dbReference>
<dbReference type="HOGENOM" id="CLU_015171_6_2_1"/>
<dbReference type="InParanoid" id="Q6ICX4"/>
<dbReference type="PhylomeDB" id="Q6ICX4"/>
<dbReference type="CD-CODE" id="4299E36E">
    <property type="entry name" value="Nucleolus"/>
</dbReference>
<dbReference type="PRO" id="PR:Q6ICX4"/>
<dbReference type="Proteomes" id="UP000006548">
    <property type="component" value="Chromosome 1"/>
</dbReference>
<dbReference type="ExpressionAtlas" id="Q6ICX4">
    <property type="expression patterns" value="baseline and differential"/>
</dbReference>
<dbReference type="GO" id="GO:0005737">
    <property type="term" value="C:cytoplasm"/>
    <property type="evidence" value="ECO:0000314"/>
    <property type="project" value="TAIR"/>
</dbReference>
<dbReference type="GO" id="GO:0005634">
    <property type="term" value="C:nucleus"/>
    <property type="evidence" value="ECO:0000314"/>
    <property type="project" value="TAIR"/>
</dbReference>
<dbReference type="GO" id="GO:0000932">
    <property type="term" value="C:P-body"/>
    <property type="evidence" value="ECO:0000314"/>
    <property type="project" value="TAIR"/>
</dbReference>
<dbReference type="GO" id="GO:0003729">
    <property type="term" value="F:mRNA binding"/>
    <property type="evidence" value="ECO:0000314"/>
    <property type="project" value="TAIR"/>
</dbReference>
<dbReference type="GO" id="GO:0006397">
    <property type="term" value="P:mRNA processing"/>
    <property type="evidence" value="ECO:0007669"/>
    <property type="project" value="UniProtKB-KW"/>
</dbReference>
<dbReference type="GO" id="GO:0043484">
    <property type="term" value="P:regulation of RNA splicing"/>
    <property type="evidence" value="ECO:0000314"/>
    <property type="project" value="TAIR"/>
</dbReference>
<dbReference type="GO" id="GO:0006417">
    <property type="term" value="P:regulation of translation"/>
    <property type="evidence" value="ECO:0000270"/>
    <property type="project" value="TAIR"/>
</dbReference>
<dbReference type="GO" id="GO:0008380">
    <property type="term" value="P:RNA splicing"/>
    <property type="evidence" value="ECO:0007669"/>
    <property type="project" value="UniProtKB-KW"/>
</dbReference>
<dbReference type="CDD" id="cd12687">
    <property type="entry name" value="RRM1_PTBPH3"/>
    <property type="match status" value="1"/>
</dbReference>
<dbReference type="CDD" id="cd12692">
    <property type="entry name" value="RRM2_PTBPH3"/>
    <property type="match status" value="1"/>
</dbReference>
<dbReference type="CDD" id="cd12698">
    <property type="entry name" value="RRM3_PTBPH3"/>
    <property type="match status" value="1"/>
</dbReference>
<dbReference type="CDD" id="cd12426">
    <property type="entry name" value="RRM4_PTBPH3"/>
    <property type="match status" value="1"/>
</dbReference>
<dbReference type="FunFam" id="3.30.70.330:FF:000882">
    <property type="entry name" value="Polypyrimidine tract-binding protein 3"/>
    <property type="match status" value="1"/>
</dbReference>
<dbReference type="FunFam" id="3.30.70.330:FF:000883">
    <property type="entry name" value="Polypyrimidine tract-binding protein 3"/>
    <property type="match status" value="1"/>
</dbReference>
<dbReference type="Gene3D" id="3.30.70.330">
    <property type="match status" value="4"/>
</dbReference>
<dbReference type="InterPro" id="IPR012677">
    <property type="entry name" value="Nucleotide-bd_a/b_plait_sf"/>
</dbReference>
<dbReference type="InterPro" id="IPR021790">
    <property type="entry name" value="PTBP1-like_RRM2"/>
</dbReference>
<dbReference type="InterPro" id="IPR034795">
    <property type="entry name" value="PTBPH3_RRM1"/>
</dbReference>
<dbReference type="InterPro" id="IPR034796">
    <property type="entry name" value="PTBPH3_RRM2"/>
</dbReference>
<dbReference type="InterPro" id="IPR034797">
    <property type="entry name" value="PTBPH3_RRM3"/>
</dbReference>
<dbReference type="InterPro" id="IPR035979">
    <property type="entry name" value="RBD_domain_sf"/>
</dbReference>
<dbReference type="InterPro" id="IPR000504">
    <property type="entry name" value="RRM_dom"/>
</dbReference>
<dbReference type="PANTHER" id="PTHR15592">
    <property type="entry name" value="MATRIN 3/NUCLEAR PROTEIN 220-RELATED"/>
    <property type="match status" value="1"/>
</dbReference>
<dbReference type="Pfam" id="PF00076">
    <property type="entry name" value="RRM_1"/>
    <property type="match status" value="2"/>
</dbReference>
<dbReference type="Pfam" id="PF13893">
    <property type="entry name" value="RRM_5"/>
    <property type="match status" value="1"/>
</dbReference>
<dbReference type="Pfam" id="PF11835">
    <property type="entry name" value="RRM_8"/>
    <property type="match status" value="1"/>
</dbReference>
<dbReference type="SMART" id="SM00360">
    <property type="entry name" value="RRM"/>
    <property type="match status" value="4"/>
</dbReference>
<dbReference type="SUPFAM" id="SSF54928">
    <property type="entry name" value="RNA-binding domain, RBD"/>
    <property type="match status" value="3"/>
</dbReference>
<dbReference type="PROSITE" id="PS50102">
    <property type="entry name" value="RRM"/>
    <property type="match status" value="3"/>
</dbReference>
<protein>
    <recommendedName>
        <fullName>Polypyrimidine tract-binding protein homolog 3</fullName>
    </recommendedName>
</protein>
<proteinExistence type="evidence at transcript level"/>
<reference key="1">
    <citation type="journal article" date="2000" name="Nature">
        <title>Sequence and analysis of chromosome 1 of the plant Arabidopsis thaliana.</title>
        <authorList>
            <person name="Theologis A."/>
            <person name="Ecker J.R."/>
            <person name="Palm C.J."/>
            <person name="Federspiel N.A."/>
            <person name="Kaul S."/>
            <person name="White O."/>
            <person name="Alonso J."/>
            <person name="Altafi H."/>
            <person name="Araujo R."/>
            <person name="Bowman C.L."/>
            <person name="Brooks S.Y."/>
            <person name="Buehler E."/>
            <person name="Chan A."/>
            <person name="Chao Q."/>
            <person name="Chen H."/>
            <person name="Cheuk R.F."/>
            <person name="Chin C.W."/>
            <person name="Chung M.K."/>
            <person name="Conn L."/>
            <person name="Conway A.B."/>
            <person name="Conway A.R."/>
            <person name="Creasy T.H."/>
            <person name="Dewar K."/>
            <person name="Dunn P."/>
            <person name="Etgu P."/>
            <person name="Feldblyum T.V."/>
            <person name="Feng J.-D."/>
            <person name="Fong B."/>
            <person name="Fujii C.Y."/>
            <person name="Gill J.E."/>
            <person name="Goldsmith A.D."/>
            <person name="Haas B."/>
            <person name="Hansen N.F."/>
            <person name="Hughes B."/>
            <person name="Huizar L."/>
            <person name="Hunter J.L."/>
            <person name="Jenkins J."/>
            <person name="Johnson-Hopson C."/>
            <person name="Khan S."/>
            <person name="Khaykin E."/>
            <person name="Kim C.J."/>
            <person name="Koo H.L."/>
            <person name="Kremenetskaia I."/>
            <person name="Kurtz D.B."/>
            <person name="Kwan A."/>
            <person name="Lam B."/>
            <person name="Langin-Hooper S."/>
            <person name="Lee A."/>
            <person name="Lee J.M."/>
            <person name="Lenz C.A."/>
            <person name="Li J.H."/>
            <person name="Li Y.-P."/>
            <person name="Lin X."/>
            <person name="Liu S.X."/>
            <person name="Liu Z.A."/>
            <person name="Luros J.S."/>
            <person name="Maiti R."/>
            <person name="Marziali A."/>
            <person name="Militscher J."/>
            <person name="Miranda M."/>
            <person name="Nguyen M."/>
            <person name="Nierman W.C."/>
            <person name="Osborne B.I."/>
            <person name="Pai G."/>
            <person name="Peterson J."/>
            <person name="Pham P.K."/>
            <person name="Rizzo M."/>
            <person name="Rooney T."/>
            <person name="Rowley D."/>
            <person name="Sakano H."/>
            <person name="Salzberg S.L."/>
            <person name="Schwartz J.R."/>
            <person name="Shinn P."/>
            <person name="Southwick A.M."/>
            <person name="Sun H."/>
            <person name="Tallon L.J."/>
            <person name="Tambunga G."/>
            <person name="Toriumi M.J."/>
            <person name="Town C.D."/>
            <person name="Utterback T."/>
            <person name="Van Aken S."/>
            <person name="Vaysberg M."/>
            <person name="Vysotskaia V.S."/>
            <person name="Walker M."/>
            <person name="Wu D."/>
            <person name="Yu G."/>
            <person name="Fraser C.M."/>
            <person name="Venter J.C."/>
            <person name="Davis R.W."/>
        </authorList>
    </citation>
    <scope>NUCLEOTIDE SEQUENCE [LARGE SCALE GENOMIC DNA]</scope>
    <source>
        <strain>cv. Columbia</strain>
    </source>
</reference>
<reference key="2">
    <citation type="journal article" date="2017" name="Plant J.">
        <title>Araport11: a complete reannotation of the Arabidopsis thaliana reference genome.</title>
        <authorList>
            <person name="Cheng C.Y."/>
            <person name="Krishnakumar V."/>
            <person name="Chan A.P."/>
            <person name="Thibaud-Nissen F."/>
            <person name="Schobel S."/>
            <person name="Town C.D."/>
        </authorList>
    </citation>
    <scope>GENOME REANNOTATION</scope>
    <source>
        <strain>cv. Columbia</strain>
    </source>
</reference>
<reference key="3">
    <citation type="submission" date="2004-07" db="EMBL/GenBank/DDBJ databases">
        <title>Arabidopsis ORF clones.</title>
        <authorList>
            <person name="Shinn P."/>
            <person name="Chen H."/>
            <person name="Cheuk R.F."/>
            <person name="Kim C.J."/>
            <person name="Ecker J.R."/>
        </authorList>
    </citation>
    <scope>NUCLEOTIDE SEQUENCE [LARGE SCALE MRNA]</scope>
    <source>
        <strain>cv. Columbia</strain>
    </source>
</reference>
<gene>
    <name type="ordered locus">At1g43190</name>
    <name type="ORF">F1I21.14</name>
</gene>
<evidence type="ECO:0000250" key="1"/>
<evidence type="ECO:0000255" key="2">
    <source>
        <dbReference type="PROSITE-ProRule" id="PRU00176"/>
    </source>
</evidence>
<evidence type="ECO:0000305" key="3"/>
<feature type="chain" id="PRO_0000081743" description="Polypyrimidine tract-binding protein homolog 3">
    <location>
        <begin position="1"/>
        <end position="432"/>
    </location>
</feature>
<feature type="domain" description="RRM 1" evidence="2">
    <location>
        <begin position="6"/>
        <end position="80"/>
    </location>
</feature>
<feature type="domain" description="RRM 2" evidence="2">
    <location>
        <begin position="98"/>
        <end position="187"/>
    </location>
</feature>
<feature type="domain" description="RRM 3" evidence="2">
    <location>
        <begin position="245"/>
        <end position="319"/>
    </location>
</feature>
<feature type="domain" description="RRM 4" evidence="2">
    <location>
        <begin position="355"/>
        <end position="429"/>
    </location>
</feature>
<organism>
    <name type="scientific">Arabidopsis thaliana</name>
    <name type="common">Mouse-ear cress</name>
    <dbReference type="NCBI Taxonomy" id="3702"/>
    <lineage>
        <taxon>Eukaryota</taxon>
        <taxon>Viridiplantae</taxon>
        <taxon>Streptophyta</taxon>
        <taxon>Embryophyta</taxon>
        <taxon>Tracheophyta</taxon>
        <taxon>Spermatophyta</taxon>
        <taxon>Magnoliopsida</taxon>
        <taxon>eudicotyledons</taxon>
        <taxon>Gunneridae</taxon>
        <taxon>Pentapetalae</taxon>
        <taxon>rosids</taxon>
        <taxon>malvids</taxon>
        <taxon>Brassicales</taxon>
        <taxon>Brassicaceae</taxon>
        <taxon>Camelineae</taxon>
        <taxon>Arabidopsis</taxon>
    </lineage>
</organism>
<accession>Q6ICX4</accession>
<sequence length="432" mass="48234">MAESSKVVHVRNVGHEISENDLLQLFQPFGVITKLVMLRAKNQALLQMQDVSSAVSALQFFTNVQPTIRGRNVYVQFSSHQELTTIEQNIHGREDEPNRILLVTIHHMLYPITVDVLHQVFSPYGFVEKLVTFQKSAGFQALIQYQVQQCAASARTALQGRNIYDGCCQLDIQFSNLEELQVNYNNDRSRDYTNPNLPAEQKGRSSHPCYGDTGVAYPQMANTSAIAAAFGGGLPPGITGTNDRCTVLVSNLNADSIDEDKLFNLFSLYGNIVRIKLLRNKPDHALVQMGDGFQAELAVHFLKGAMLFGKRLEVNFSKHPNITPGTDSHDYVNSNLNRFNRNAAKNYRYCCSPTKMIHLSTLPQDVTEEEVMNHVQEHGAVVNTKVFEMNGKKQALVQFENEEEAAEALVCKHATSLGGSIIRISFSQLQTI</sequence>